<protein>
    <recommendedName>
        <fullName evidence="1">Translation initiation factor 1A 2</fullName>
        <shortName evidence="1">aIF-1A 2</shortName>
    </recommendedName>
</protein>
<feature type="chain" id="PRO_0000259365" description="Translation initiation factor 1A 2">
    <location>
        <begin position="1"/>
        <end position="94"/>
    </location>
</feature>
<feature type="domain" description="S1-like" evidence="1">
    <location>
        <begin position="6"/>
        <end position="80"/>
    </location>
</feature>
<proteinExistence type="inferred from homology"/>
<sequence>MSEESGRRNLRMPSDDEMFAVVVEHNGGNHVRVRCQDGENRMGRIPGRMKYRTWINEGDVVLVEPWAWQDEKANIEWRYSEQDAEQLRTEGHIK</sequence>
<gene>
    <name evidence="1" type="primary">eif1a2</name>
    <name type="ordered locus">HQ_1727A</name>
</gene>
<name>IF1A2_HALWD</name>
<keyword id="KW-0396">Initiation factor</keyword>
<keyword id="KW-0648">Protein biosynthesis</keyword>
<keyword id="KW-1185">Reference proteome</keyword>
<evidence type="ECO:0000255" key="1">
    <source>
        <dbReference type="HAMAP-Rule" id="MF_00216"/>
    </source>
</evidence>
<comment type="function">
    <text evidence="1">Seems to be required for maximal rate of protein biosynthesis. Enhances ribosome dissociation into subunits and stabilizes the binding of the initiator Met-tRNA(I) to 40 S ribosomal subunits.</text>
</comment>
<comment type="similarity">
    <text evidence="1">Belongs to the eIF-1A family.</text>
</comment>
<dbReference type="EMBL" id="AM180088">
    <property type="protein sequence ID" value="CAJ51855.1"/>
    <property type="molecule type" value="Genomic_DNA"/>
</dbReference>
<dbReference type="RefSeq" id="WP_014555549.1">
    <property type="nucleotide sequence ID" value="NC_008212.1"/>
</dbReference>
<dbReference type="SMR" id="Q18JF4"/>
<dbReference type="STRING" id="362976.HQ_1727A"/>
<dbReference type="GeneID" id="4194780"/>
<dbReference type="KEGG" id="hwa:HQ_1727A"/>
<dbReference type="eggNOG" id="arCOG01179">
    <property type="taxonomic scope" value="Archaea"/>
</dbReference>
<dbReference type="HOGENOM" id="CLU_109098_1_2_2"/>
<dbReference type="Proteomes" id="UP000001975">
    <property type="component" value="Chromosome"/>
</dbReference>
<dbReference type="GO" id="GO:0003723">
    <property type="term" value="F:RNA binding"/>
    <property type="evidence" value="ECO:0007669"/>
    <property type="project" value="InterPro"/>
</dbReference>
<dbReference type="GO" id="GO:0003743">
    <property type="term" value="F:translation initiation factor activity"/>
    <property type="evidence" value="ECO:0007669"/>
    <property type="project" value="UniProtKB-UniRule"/>
</dbReference>
<dbReference type="CDD" id="cd05793">
    <property type="entry name" value="S1_IF1A"/>
    <property type="match status" value="1"/>
</dbReference>
<dbReference type="Gene3D" id="2.40.50.140">
    <property type="entry name" value="Nucleic acid-binding proteins"/>
    <property type="match status" value="1"/>
</dbReference>
<dbReference type="HAMAP" id="MF_00216">
    <property type="entry name" value="aIF_1A"/>
    <property type="match status" value="1"/>
</dbReference>
<dbReference type="InterPro" id="IPR012340">
    <property type="entry name" value="NA-bd_OB-fold"/>
</dbReference>
<dbReference type="InterPro" id="IPR006196">
    <property type="entry name" value="RNA-binding_domain_S1_IF1"/>
</dbReference>
<dbReference type="InterPro" id="IPR001253">
    <property type="entry name" value="TIF_eIF-1A"/>
</dbReference>
<dbReference type="InterPro" id="IPR018104">
    <property type="entry name" value="TIF_eIF-1A_CS"/>
</dbReference>
<dbReference type="NCBIfam" id="NF003083">
    <property type="entry name" value="PRK04012.1-2"/>
    <property type="match status" value="1"/>
</dbReference>
<dbReference type="NCBIfam" id="NF003084">
    <property type="entry name" value="PRK04012.1-3"/>
    <property type="match status" value="1"/>
</dbReference>
<dbReference type="NCBIfam" id="NF003085">
    <property type="entry name" value="PRK04012.1-5"/>
    <property type="match status" value="1"/>
</dbReference>
<dbReference type="PANTHER" id="PTHR21668">
    <property type="entry name" value="EIF-1A"/>
    <property type="match status" value="1"/>
</dbReference>
<dbReference type="Pfam" id="PF01176">
    <property type="entry name" value="eIF-1a"/>
    <property type="match status" value="1"/>
</dbReference>
<dbReference type="SMART" id="SM00652">
    <property type="entry name" value="eIF1a"/>
    <property type="match status" value="1"/>
</dbReference>
<dbReference type="SUPFAM" id="SSF50249">
    <property type="entry name" value="Nucleic acid-binding proteins"/>
    <property type="match status" value="1"/>
</dbReference>
<dbReference type="PROSITE" id="PS01262">
    <property type="entry name" value="IF1A"/>
    <property type="match status" value="1"/>
</dbReference>
<dbReference type="PROSITE" id="PS50832">
    <property type="entry name" value="S1_IF1_TYPE"/>
    <property type="match status" value="1"/>
</dbReference>
<organism>
    <name type="scientific">Haloquadratum walsbyi (strain DSM 16790 / HBSQ001)</name>
    <dbReference type="NCBI Taxonomy" id="362976"/>
    <lineage>
        <taxon>Archaea</taxon>
        <taxon>Methanobacteriati</taxon>
        <taxon>Methanobacteriota</taxon>
        <taxon>Stenosarchaea group</taxon>
        <taxon>Halobacteria</taxon>
        <taxon>Halobacteriales</taxon>
        <taxon>Haloferacaceae</taxon>
        <taxon>Haloquadratum</taxon>
    </lineage>
</organism>
<accession>Q18JF4</accession>
<reference key="1">
    <citation type="journal article" date="2006" name="BMC Genomics">
        <title>The genome of the square archaeon Haloquadratum walsbyi: life at the limits of water activity.</title>
        <authorList>
            <person name="Bolhuis H."/>
            <person name="Palm P."/>
            <person name="Wende A."/>
            <person name="Falb M."/>
            <person name="Rampp M."/>
            <person name="Rodriguez-Valera F."/>
            <person name="Pfeiffer F."/>
            <person name="Oesterhelt D."/>
        </authorList>
    </citation>
    <scope>NUCLEOTIDE SEQUENCE [LARGE SCALE GENOMIC DNA]</scope>
    <source>
        <strain>DSM 16790 / HBSQ001</strain>
    </source>
</reference>